<evidence type="ECO:0000269" key="1">
    <source>
    </source>
</evidence>
<evidence type="ECO:0000269" key="2">
    <source>
    </source>
</evidence>
<evidence type="ECO:0000269" key="3">
    <source>
    </source>
</evidence>
<evidence type="ECO:0000269" key="4">
    <source>
    </source>
</evidence>
<evidence type="ECO:0000269" key="5">
    <source>
    </source>
</evidence>
<evidence type="ECO:0000269" key="6">
    <source>
    </source>
</evidence>
<evidence type="ECO:0000269" key="7">
    <source>
    </source>
</evidence>
<evidence type="ECO:0000269" key="8">
    <source>
    </source>
</evidence>
<evidence type="ECO:0000303" key="9">
    <source>
    </source>
</evidence>
<evidence type="ECO:0000303" key="10">
    <source>
    </source>
</evidence>
<evidence type="ECO:0000303" key="11">
    <source>
    </source>
</evidence>
<evidence type="ECO:0000305" key="12"/>
<evidence type="ECO:0000305" key="13">
    <source>
    </source>
</evidence>
<evidence type="ECO:0000312" key="14">
    <source>
        <dbReference type="EMBL" id="CAD47951.1"/>
    </source>
</evidence>
<evidence type="ECO:0007744" key="15">
    <source>
        <dbReference type="PDB" id="3K7M"/>
    </source>
</evidence>
<evidence type="ECO:0007744" key="16">
    <source>
        <dbReference type="PDB" id="3K7Q"/>
    </source>
</evidence>
<evidence type="ECO:0007744" key="17">
    <source>
        <dbReference type="PDB" id="3K7T"/>
    </source>
</evidence>
<evidence type="ECO:0007744" key="18">
    <source>
        <dbReference type="PDB" id="3NG7"/>
    </source>
</evidence>
<evidence type="ECO:0007744" key="19">
    <source>
        <dbReference type="PDB" id="3NGC"/>
    </source>
</evidence>
<evidence type="ECO:0007744" key="20">
    <source>
        <dbReference type="PDB" id="3NH3"/>
    </source>
</evidence>
<evidence type="ECO:0007744" key="21">
    <source>
        <dbReference type="PDB" id="3NHO"/>
    </source>
</evidence>
<evidence type="ECO:0007744" key="22">
    <source>
        <dbReference type="PDB" id="3NK0"/>
    </source>
</evidence>
<evidence type="ECO:0007744" key="23">
    <source>
        <dbReference type="PDB" id="3NK1"/>
    </source>
</evidence>
<evidence type="ECO:0007744" key="24">
    <source>
        <dbReference type="PDB" id="3NK2"/>
    </source>
</evidence>
<evidence type="ECO:0007744" key="25">
    <source>
        <dbReference type="PDB" id="3NN0"/>
    </source>
</evidence>
<evidence type="ECO:0007744" key="26">
    <source>
        <dbReference type="PDB" id="3NN6"/>
    </source>
</evidence>
<evidence type="ECO:0007829" key="27">
    <source>
        <dbReference type="PDB" id="3K7M"/>
    </source>
</evidence>
<gene>
    <name evidence="14" type="primary">6-hlno</name>
</gene>
<geneLocation type="plasmid">
    <name>pAO1</name>
</geneLocation>
<protein>
    <recommendedName>
        <fullName evidence="12">(S)-6-hydroxynicotine oxidase</fullName>
        <ecNumber evidence="2 3 4 6 7 8">1.5.3.5</ecNumber>
    </recommendedName>
    <alternativeName>
        <fullName evidence="11">6-hydroxy-L-nicotine oxidase</fullName>
        <shortName evidence="11">6-HLNO</shortName>
    </alternativeName>
    <alternativeName>
        <fullName evidence="10">L-6-hydroxynicotine oxidase</fullName>
    </alternativeName>
    <alternativeName>
        <fullName evidence="9">L-hydroxynicotine oxidase</fullName>
        <shortName evidence="9">LHNO</shortName>
    </alternativeName>
</protein>
<organism>
    <name type="scientific">Paenarthrobacter nicotinovorans</name>
    <name type="common">Arthrobacter nicotinovorans</name>
    <dbReference type="NCBI Taxonomy" id="29320"/>
    <lineage>
        <taxon>Bacteria</taxon>
        <taxon>Bacillati</taxon>
        <taxon>Actinomycetota</taxon>
        <taxon>Actinomycetes</taxon>
        <taxon>Micrococcales</taxon>
        <taxon>Micrococcaceae</taxon>
        <taxon>Paenarthrobacter</taxon>
    </lineage>
</organism>
<accession>Q93NH4</accession>
<accession>O86101</accession>
<comment type="function">
    <text evidence="2 3 4 6 7 8">Involved in the degradation of L-nicotine (PubMed:5849820). Catalyzes the oxidation of (S)-6-hydroxynicotine (6-hydroxy-L-nicotine) to 6-hydroxypseudooxynicotine (PubMed:21383134, PubMed:26744768, PubMed:28080034, PubMed:4965794, PubMed:5646150, PubMed:5849820). Oxidation of the pyrrolidine ring of (S)-6-hydroxynicotine leads to the formation of the optically inactive 6-hydroxy-N-methylmyosmine, which hydrolyzes spontaneously to 6-hydroxypseudooxynicotine (PubMed:21383134, PubMed:26744768, PubMed:28080034, PubMed:4965794). Acts with absolute stereospecificity on the L-form of 6-hydroxynicotine (PubMed:4965794). Can also use (S)-6-hydroxynornicotine (PubMed:26744768, PubMed:28080034).</text>
</comment>
<comment type="catalytic activity">
    <reaction evidence="2 3 4 6 7 8">
        <text>(S)-6-hydroxynicotine + O2 + H2O = 6-hydroxypseudooxynicotine + H2O2</text>
        <dbReference type="Rhea" id="RHEA:11880"/>
        <dbReference type="ChEBI" id="CHEBI:15377"/>
        <dbReference type="ChEBI" id="CHEBI:15379"/>
        <dbReference type="ChEBI" id="CHEBI:16240"/>
        <dbReference type="ChEBI" id="CHEBI:58182"/>
        <dbReference type="ChEBI" id="CHEBI:58682"/>
        <dbReference type="EC" id="1.5.3.5"/>
    </reaction>
    <physiologicalReaction direction="left-to-right" evidence="2 3 4 6 7 8">
        <dbReference type="Rhea" id="RHEA:11881"/>
    </physiologicalReaction>
</comment>
<comment type="catalytic activity">
    <reaction evidence="2 3 4 6">
        <text>(S)-6-hydroxynicotine + O2 = 6-hydroxy-N-methylmyosmine + H2O2</text>
        <dbReference type="Rhea" id="RHEA:46976"/>
        <dbReference type="ChEBI" id="CHEBI:15379"/>
        <dbReference type="ChEBI" id="CHEBI:16240"/>
        <dbReference type="ChEBI" id="CHEBI:58182"/>
        <dbReference type="ChEBI" id="CHEBI:87164"/>
    </reaction>
    <physiologicalReaction direction="left-to-right" evidence="2 3 4 6">
        <dbReference type="Rhea" id="RHEA:46977"/>
    </physiologicalReaction>
</comment>
<comment type="cofactor">
    <cofactor evidence="1 2 6 7">
        <name>FAD</name>
        <dbReference type="ChEBI" id="CHEBI:57692"/>
    </cofactor>
    <text evidence="1 2">Binds 1 FAD per subunit.</text>
</comment>
<comment type="activity regulation">
    <text evidence="6 7 8">Inhibited by (R)-6-hydroxynicotine (PubMed:4965794, PubMed:5849820). Inhibited by high concentrations of phenanthroline (PubMed:5646150). Activity is strongly affected by Hg(2+) and p-chloromercuriphenylsulfonate, but not by N-ethylmaleimide and 5,5'-dithiobis-(2-nitrobenzoate) (PubMed:5646150).</text>
</comment>
<comment type="biophysicochemical properties">
    <kinetics>
        <KM evidence="8">0.02 mM for (S)-6-hydroxynicotine</KM>
        <KM evidence="3">0.042 mM for (S)-6-hydroxynicotine</KM>
        <KM evidence="3">0.064 mM for (S)-6-hydroxynornicotine</KM>
        <text evidence="3">kcat is 30 sec(-1) with (S)-6-hydroxynicotine as substrate. kcat is 16 sec(-1) with (S)-6-hydroxynornicotine as substrate.</text>
    </kinetics>
    <phDependence>
        <text evidence="7">Fairly stable between pH 6 and 9.</text>
    </phDependence>
</comment>
<comment type="pathway">
    <text evidence="13">Alkaloid degradation; nicotine degradation; 6-hydroxypseudooxynicotine from nicotine (S-isomer route): step 2/2.</text>
</comment>
<comment type="subunit">
    <text evidence="1 7">Homodimer.</text>
</comment>
<comment type="subcellular location">
    <subcellularLocation>
        <location evidence="5">Cytoplasm</location>
    </subcellularLocation>
</comment>
<comment type="induction">
    <text evidence="5 8">Induced in the presence of L-nicotine and D-nicotine (PubMed:5849820). Expressed during logarithmic growth and stationary phase (PubMed:4019415).</text>
</comment>
<comment type="domain">
    <text evidence="1 2">Consists of two domains, an FAD-binding domain and a substrate-binding domain (PubMed:20006620). The inactive D-stereoisomer binds in mirror symmetry with respect to the catalytic axis, revealing absolute stereospecificity of hydrogen transfer to the flavin (PubMed:21383134).</text>
</comment>
<comment type="similarity">
    <text evidence="12">Belongs to the flavin monoamine oxidase family.</text>
</comment>
<keyword id="KW-0002">3D-structure</keyword>
<keyword id="KW-0017">Alkaloid metabolism</keyword>
<keyword id="KW-0963">Cytoplasm</keyword>
<keyword id="KW-0274">FAD</keyword>
<keyword id="KW-0285">Flavoprotein</keyword>
<keyword id="KW-0547">Nucleotide-binding</keyword>
<keyword id="KW-0560">Oxidoreductase</keyword>
<keyword id="KW-0614">Plasmid</keyword>
<proteinExistence type="evidence at protein level"/>
<feature type="chain" id="PRO_0000455450" description="(S)-6-hydroxynicotine oxidase">
    <location>
        <begin position="1"/>
        <end position="425"/>
    </location>
</feature>
<feature type="binding site" evidence="1 2 15 16 17 18 19 20 21 22 23 24 25">
    <location>
        <position position="12"/>
    </location>
    <ligand>
        <name>FAD</name>
        <dbReference type="ChEBI" id="CHEBI:57692"/>
    </ligand>
</feature>
<feature type="binding site" evidence="1 2 15 16 17 18 19 20 21 22 23 24 25">
    <location>
        <position position="31"/>
    </location>
    <ligand>
        <name>FAD</name>
        <dbReference type="ChEBI" id="CHEBI:57692"/>
    </ligand>
</feature>
<feature type="binding site" evidence="1 2 15 16 17 18 19 20 21 22 23 24 25">
    <location>
        <begin position="38"/>
        <end position="39"/>
    </location>
    <ligand>
        <name>FAD</name>
        <dbReference type="ChEBI" id="CHEBI:57692"/>
    </ligand>
</feature>
<feature type="binding site" evidence="1 2 15 16 17 18 19 20 21 22 23 24 25">
    <location>
        <begin position="56"/>
        <end position="59"/>
    </location>
    <ligand>
        <name>FAD</name>
        <dbReference type="ChEBI" id="CHEBI:57692"/>
    </ligand>
</feature>
<feature type="binding site" evidence="1 2 16 18 19 20">
    <location>
        <position position="166"/>
    </location>
    <ligand>
        <name>(S)-6-hydroxynicotine</name>
        <dbReference type="ChEBI" id="CHEBI:58182"/>
    </ligand>
</feature>
<feature type="binding site" evidence="1 2 15 16 17 18 19 20 21 22 23 24 25">
    <location>
        <position position="226"/>
    </location>
    <ligand>
        <name>FAD</name>
        <dbReference type="ChEBI" id="CHEBI:57692"/>
    </ligand>
</feature>
<feature type="binding site" evidence="1 2 16 18 19 20">
    <location>
        <position position="311"/>
    </location>
    <ligand>
        <name>(S)-6-hydroxynicotine</name>
        <dbReference type="ChEBI" id="CHEBI:58182"/>
    </ligand>
</feature>
<feature type="binding site" evidence="1 2 16 18 19 20">
    <location>
        <position position="326"/>
    </location>
    <ligand>
        <name>(S)-6-hydroxynicotine</name>
        <dbReference type="ChEBI" id="CHEBI:58182"/>
    </ligand>
</feature>
<feature type="binding site" evidence="1 2 18 19 20">
    <location>
        <position position="371"/>
    </location>
    <ligand>
        <name>(S)-6-hydroxynicotine</name>
        <dbReference type="ChEBI" id="CHEBI:58182"/>
    </ligand>
</feature>
<feature type="binding site" evidence="1 2 15 16 17 18 19 20 21 22 23 24 25">
    <location>
        <position position="398"/>
    </location>
    <ligand>
        <name>FAD</name>
        <dbReference type="ChEBI" id="CHEBI:57692"/>
    </ligand>
</feature>
<feature type="binding site" evidence="1 2 15 16 17 18 19 20 21 22 23 24 25">
    <location>
        <begin position="406"/>
        <end position="408"/>
    </location>
    <ligand>
        <name>FAD</name>
        <dbReference type="ChEBI" id="CHEBI:57692"/>
    </ligand>
</feature>
<feature type="binding site" evidence="1 2 16 18 19 20">
    <location>
        <position position="407"/>
    </location>
    <ligand>
        <name>(S)-6-hydroxynicotine</name>
        <dbReference type="ChEBI" id="CHEBI:58182"/>
    </ligand>
</feature>
<feature type="mutagenesis site" description="30-fold decrease in kcat/Km and kred for (S)-6-hydroxynicotine, with larger effects on the kcat/Km value for (S)-6-hydroxynornicotine." evidence="4">
    <original>N</original>
    <variation>A</variation>
    <location>
        <position position="166"/>
    </location>
</feature>
<feature type="mutagenesis site" description="3-fold decrease in kcat with (S)-6-hydroxynicotine as substrate." evidence="3">
    <original>H</original>
    <variation>N</variation>
    <location>
        <position position="187"/>
    </location>
</feature>
<feature type="mutagenesis site" description="No change in kcat with (S)-6-hydroxynicotine as substrate." evidence="3">
    <original>H</original>
    <variation>Q</variation>
    <location>
        <position position="187"/>
    </location>
</feature>
<feature type="mutagenesis site" description="10-fold decrease in kcat/Km and kred for (S)-6-hydroxynicotine. 6000-fold decrease in the kcat/Km value for oxygen." evidence="4">
    <original>K</original>
    <variation>M</variation>
    <location>
        <position position="287"/>
    </location>
</feature>
<feature type="mutagenesis site" description="1.3-fold increase in kcat with (S)-6-hydroxynicotine as substrate." evidence="3">
    <original>E</original>
    <variation>Q</variation>
    <location>
        <position position="300"/>
    </location>
</feature>
<feature type="mutagenesis site" description="4-fold decrease in kcat/Km and kred for (S)-6-hydroxynicotine, with larger effects on the kcat/Km value for (S)-6-hydroxynornicotine." evidence="4">
    <original>Y</original>
    <variation>F</variation>
    <location>
        <position position="311"/>
    </location>
</feature>
<feature type="mutagenesis site" description="No change in kcat with (S)-6-hydroxynicotine as substrate." evidence="3">
    <original>Y</original>
    <variation>F</variation>
    <location>
        <position position="407"/>
    </location>
</feature>
<feature type="sequence conflict" description="In Ref. 2; CAA11306." evidence="12" ref="2">
    <original>D</original>
    <variation>G</variation>
    <location>
        <position position="304"/>
    </location>
</feature>
<feature type="strand" evidence="27">
    <location>
        <begin position="2"/>
        <end position="7"/>
    </location>
</feature>
<feature type="helix" evidence="27">
    <location>
        <begin position="11"/>
        <end position="22"/>
    </location>
</feature>
<feature type="strand" evidence="27">
    <location>
        <begin position="27"/>
        <end position="30"/>
    </location>
</feature>
<feature type="strand" evidence="27">
    <location>
        <begin position="32"/>
        <end position="37"/>
    </location>
</feature>
<feature type="strand" evidence="27">
    <location>
        <begin position="42"/>
        <end position="44"/>
    </location>
</feature>
<feature type="strand" evidence="27">
    <location>
        <begin position="46"/>
        <end position="48"/>
    </location>
</feature>
<feature type="strand" evidence="27">
    <location>
        <begin position="52"/>
        <end position="56"/>
    </location>
</feature>
<feature type="turn" evidence="27">
    <location>
        <begin position="62"/>
        <end position="64"/>
    </location>
</feature>
<feature type="helix" evidence="27">
    <location>
        <begin position="66"/>
        <end position="75"/>
    </location>
</feature>
<feature type="strand" evidence="27">
    <location>
        <begin position="79"/>
        <end position="81"/>
    </location>
</feature>
<feature type="strand" evidence="27">
    <location>
        <begin position="98"/>
        <end position="101"/>
    </location>
</feature>
<feature type="helix" evidence="27">
    <location>
        <begin position="105"/>
        <end position="107"/>
    </location>
</feature>
<feature type="helix" evidence="27">
    <location>
        <begin position="108"/>
        <end position="122"/>
    </location>
</feature>
<feature type="turn" evidence="27">
    <location>
        <begin position="127"/>
        <end position="129"/>
    </location>
</feature>
<feature type="strand" evidence="27">
    <location>
        <begin position="133"/>
        <end position="135"/>
    </location>
</feature>
<feature type="helix" evidence="27">
    <location>
        <begin position="137"/>
        <end position="139"/>
    </location>
</feature>
<feature type="helix" evidence="27">
    <location>
        <begin position="143"/>
        <end position="150"/>
    </location>
</feature>
<feature type="helix" evidence="27">
    <location>
        <begin position="154"/>
        <end position="168"/>
    </location>
</feature>
<feature type="turn" evidence="27">
    <location>
        <begin position="172"/>
        <end position="174"/>
    </location>
</feature>
<feature type="helix" evidence="27">
    <location>
        <begin position="177"/>
        <end position="186"/>
    </location>
</feature>
<feature type="helix" evidence="27">
    <location>
        <begin position="191"/>
        <end position="196"/>
    </location>
</feature>
<feature type="strand" evidence="27">
    <location>
        <begin position="200"/>
        <end position="202"/>
    </location>
</feature>
<feature type="helix" evidence="27">
    <location>
        <begin position="207"/>
        <end position="214"/>
    </location>
</feature>
<feature type="strand" evidence="27">
    <location>
        <begin position="220"/>
        <end position="223"/>
    </location>
</feature>
<feature type="strand" evidence="27">
    <location>
        <begin position="226"/>
        <end position="230"/>
    </location>
</feature>
<feature type="strand" evidence="27">
    <location>
        <begin position="232"/>
        <end position="240"/>
    </location>
</feature>
<feature type="strand" evidence="27">
    <location>
        <begin position="246"/>
        <end position="253"/>
    </location>
</feature>
<feature type="helix" evidence="27">
    <location>
        <begin position="257"/>
        <end position="262"/>
    </location>
</feature>
<feature type="strand" evidence="27">
    <location>
        <begin position="263"/>
        <end position="267"/>
    </location>
</feature>
<feature type="helix" evidence="27">
    <location>
        <begin position="271"/>
        <end position="279"/>
    </location>
</feature>
<feature type="strand" evidence="27">
    <location>
        <begin position="285"/>
        <end position="294"/>
    </location>
</feature>
<feature type="strand" evidence="27">
    <location>
        <begin position="299"/>
        <end position="315"/>
    </location>
</feature>
<feature type="strand" evidence="27">
    <location>
        <begin position="317"/>
        <end position="328"/>
    </location>
</feature>
<feature type="turn" evidence="27">
    <location>
        <begin position="329"/>
        <end position="331"/>
    </location>
</feature>
<feature type="helix" evidence="27">
    <location>
        <begin position="337"/>
        <end position="347"/>
    </location>
</feature>
<feature type="strand" evidence="27">
    <location>
        <begin position="352"/>
        <end position="357"/>
    </location>
</feature>
<feature type="turn" evidence="27">
    <location>
        <begin position="361"/>
        <end position="363"/>
    </location>
</feature>
<feature type="turn" evidence="27">
    <location>
        <begin position="365"/>
        <end position="367"/>
    </location>
</feature>
<feature type="strand" evidence="27">
    <location>
        <begin position="368"/>
        <end position="371"/>
    </location>
</feature>
<feature type="turn" evidence="27">
    <location>
        <begin position="376"/>
        <end position="381"/>
    </location>
</feature>
<feature type="helix" evidence="27">
    <location>
        <begin position="384"/>
        <end position="387"/>
    </location>
</feature>
<feature type="strand" evidence="27">
    <location>
        <begin position="393"/>
        <end position="395"/>
    </location>
</feature>
<feature type="helix" evidence="27">
    <location>
        <begin position="398"/>
        <end position="400"/>
    </location>
</feature>
<feature type="strand" evidence="27">
    <location>
        <begin position="402"/>
        <end position="404"/>
    </location>
</feature>
<feature type="helix" evidence="27">
    <location>
        <begin position="408"/>
        <end position="424"/>
    </location>
</feature>
<sequence>MYDAIVVGGGFSGLKAARDLTNAGKKVLLLEGGERLGGRAYSRESRNVPGLRVEIGGAYLHRKHHPRLAAELDRYGIPTAAASEFTSFRHRLGPTAVDQAFPIPGSEAVAVEAATYTLLRDAHRIDLEKGLENQDLEDLDIPLNEYVDKLDLPPVSRQFLLAWAWNMLGQPADQASALWMLQLVAAHHYSILGVVLSLDEVFSNGSADLVDAMSQEIPEIRLQTVVTGIDQSGDVVNVTVKDGHAFQAHSVIVATPMNTWRRIVFTPALPERRRSVIEEGHGGQGLKILIHVRGAEAGIECVGDGIFPTLYDYCEVSESERLLVAFTDSGSFDPTDIGAVKDAVLYYLPEVEVLGIDYHDWIADPLFEGPWVAPRVGQFSRVHKELGEPAGRIHFVGSDVSLEFPGYIEGALETAECAVNAILHS</sequence>
<reference key="1">
    <citation type="journal article" date="1998" name="J. Mol. Biol.">
        <title>Gene structures and properties of enzymes of the plasmid-encoded nicotine catabolism of Arthrobacter nicotinovorans.</title>
        <authorList>
            <person name="Schenk S."/>
            <person name="Hoelz A."/>
            <person name="Kraus B."/>
            <person name="Decker K."/>
        </authorList>
    </citation>
    <scope>NUCLEOTIDE SEQUENCE [GENOMIC DNA]</scope>
    <source>
        <strain>ATCC 49919 / DSM 420 / JCM 3874 / KCTC 9902 / LMG 16253 / NBRC 15511</strain>
        <plasmid>pAO1</plasmid>
    </source>
</reference>
<reference key="2">
    <citation type="journal article" date="1999" name="J. Mol. Evol.">
        <title>Horizontal gene transfer involved in the convergent evolution of the plasmid-encoded enantioselective 6-hydroxynicotine oxidases.</title>
        <authorList>
            <person name="Schenk S."/>
            <person name="Decker K."/>
        </authorList>
    </citation>
    <scope>NUCLEOTIDE SEQUENCE [GENOMIC DNA]</scope>
    <source>
        <strain>ATCC 49919 / DSM 420 / JCM 3874 / KCTC 9902 / LMG 16253 / NBRC 15511</strain>
        <plasmid>pAO1</plasmid>
    </source>
</reference>
<reference key="3">
    <citation type="journal article" date="2001" name="J. Bacteriol.">
        <title>Gene cluster on pAO1 of Arthrobacter nicotinovorans involved in degradation of the plant alkaloid nicotine: cloning, purification, and characterization of 2,6-dihydroxypyridine 3-hydroxylase.</title>
        <authorList>
            <person name="Baitsch D."/>
            <person name="Sandu C."/>
            <person name="Brandsch R."/>
            <person name="Igloi G.L."/>
        </authorList>
    </citation>
    <scope>NUCLEOTIDE SEQUENCE [GENOMIC DNA]</scope>
    <source>
        <strain>ATCC 49919 / DSM 420 / JCM 3874 / KCTC 9902 / LMG 16253 / NBRC 15511</strain>
        <plasmid>pAO1</plasmid>
    </source>
</reference>
<reference key="4">
    <citation type="journal article" date="2003" name="J. Bacteriol.">
        <title>Sequence of the 165-kilobase catabolic plasmid pAO1 from Arthrobacter nicotinovorans and identification of a pAO1-dependent nicotine uptake system.</title>
        <authorList>
            <person name="Igloi G.L."/>
            <person name="Brandsch R."/>
        </authorList>
    </citation>
    <scope>NUCLEOTIDE SEQUENCE [LARGE SCALE GENOMIC DNA]</scope>
    <source>
        <strain>ATCC 49919 / DSM 420 / JCM 3874 / KCTC 9902 / LMG 16253 / NBRC 15511</strain>
        <plasmid>pAO1</plasmid>
    </source>
</reference>
<reference key="5">
    <citation type="journal article" date="1965" name="Biochim. Biophys. Acta">
        <title>Induction and purification of stereospecific nicotine oxidizing enzymes from Arthrobacter oxidans.</title>
        <authorList>
            <person name="Decker K."/>
            <person name="Bleeg H."/>
        </authorList>
    </citation>
    <scope>FUNCTION</scope>
    <scope>CATALYTIC ACTIVITY</scope>
    <scope>ACTIVITY REGULATION</scope>
    <scope>BIOPHYSICOCHEMICAL PROPERTIES</scope>
    <scope>PATHWAY</scope>
    <scope>INDUCTION</scope>
</reference>
<reference key="6">
    <citation type="journal article" date="1967" name="Eur. J. Biochem.">
        <title>Mechanism and specificity of L- and D-6-hydroxynicotine oxidase.</title>
        <authorList>
            <person name="Decker K."/>
            <person name="Dai V.D."/>
        </authorList>
    </citation>
    <scope>FUNCTION</scope>
    <scope>CATALYTIC ACTIVITY</scope>
    <scope>COFACTOR</scope>
    <scope>ACTIVITY REGULATION</scope>
</reference>
<reference key="7">
    <citation type="journal article" date="1968" name="Eur. J. Biochem.">
        <title>Purification and properties of L-6-hydroxynicotine oxidase.</title>
        <authorList>
            <person name="Dai V.D."/>
            <person name="Decker K."/>
            <person name="Sund H."/>
        </authorList>
    </citation>
    <scope>FUNCTION</scope>
    <scope>CATALYTIC ACTIVITY</scope>
    <scope>COFACTOR</scope>
    <scope>ACTIVITY REGULATION</scope>
    <scope>BIOPHYSICOCHEMICAL PROPERTIES</scope>
    <scope>SUBUNIT</scope>
</reference>
<reference key="8">
    <citation type="journal article" date="1985" name="J. Bacteriol.">
        <title>Localization of the enantiozymes of 6-hydroxy-nicotine oxidase in Arthrobacter oxidans by electron immunochemistry.</title>
        <authorList>
            <person name="Swafford J.R."/>
            <person name="Reeves H.C."/>
            <person name="Brandsch R."/>
        </authorList>
    </citation>
    <scope>SUBCELLULAR LOCATION</scope>
    <scope>INDUCTION</scope>
</reference>
<reference key="9">
    <citation type="journal article" date="2016" name="Biochemistry">
        <title>Mechanism of the flavoprotein L-hydroxynicotine oxidase: kinetic mechanism, substrate specificity, reaction product, and roles of active-site residues.</title>
        <authorList>
            <person name="Fitzpatrick P.F."/>
            <person name="Chadegani F."/>
            <person name="Zhang S."/>
            <person name="Roberts K.M."/>
            <person name="Hinck C.S."/>
        </authorList>
    </citation>
    <scope>FUNCTION</scope>
    <scope>CATALYTIC ACTIVITY</scope>
    <scope>REACTION MECHANISM</scope>
    <scope>BIOPHYSICOCHEMICAL PROPERTIES</scope>
    <scope>MUTAGENESIS OF HIS-187; GLU-300 AND TYR-407</scope>
</reference>
<reference key="10">
    <citation type="journal article" date="2017" name="Biochemistry">
        <title>Mechanism of flavoprotein L-6-hydroxynicotine oxidase: pH and solvent isotope effects and identification of key active site residues.</title>
        <authorList>
            <person name="Fitzpatrick P.F."/>
            <person name="Chadegani F."/>
            <person name="Zhang S."/>
            <person name="Dougherty V."/>
        </authorList>
    </citation>
    <scope>FUNCTION</scope>
    <scope>CATALYTIC ACTIVITY</scope>
    <scope>REACTION MECHANISM</scope>
    <scope>MUTAGENESIS OF ASN-166; LYS-287 AND TYR-311</scope>
</reference>
<reference evidence="15 16 17" key="11">
    <citation type="journal article" date="2010" name="J. Mol. Biol.">
        <title>Crystal structure analysis of free and substrate-bound 6-hydroxy-L-nicotine oxidase from Arthrobacter nicotinovorans.</title>
        <authorList>
            <person name="Kachalova G.S."/>
            <person name="Bourenkov G.P."/>
            <person name="Mengesdorf T."/>
            <person name="Schenk S."/>
            <person name="Maun H.R."/>
            <person name="Burghammer M."/>
            <person name="Riekel C."/>
            <person name="Decker K."/>
            <person name="Bartunik H.D."/>
        </authorList>
    </citation>
    <scope>X-RAY CRYSTALLOGRAPHY (1.95 ANGSTROMS) IN COMPLEXES WITH FAD AND 6-HYDROXY-L-NICOTINE</scope>
    <scope>COFACTOR</scope>
    <scope>SUBUNIT</scope>
    <scope>DOMAIN</scope>
</reference>
<reference evidence="18 19 20 21 22 23 24 25 26" key="12">
    <citation type="journal article" date="2011" name="Proc. Natl. Acad. Sci. U.S.A.">
        <title>Crystallographic snapshots of the complete reaction cycle of nicotine degradation by an amine oxidase of the monoamine oxidase (MAO) family.</title>
        <authorList>
            <person name="Kachalova G."/>
            <person name="Decker K."/>
            <person name="Holt A."/>
            <person name="Bartunik H.D."/>
        </authorList>
    </citation>
    <scope>X-RAY CRYSTALLOGRAPHY (1.95 ANGSTROMS) IN COMPLEXES WITH FAD; 6-HYDROXY-L-NICOTINE; 6-HYDROXY-D-NICOTINE; 6-HYDROXY-N-METHYLMYOSMINE; 6-HYDROXYPSEUDOOXYNICOTINE AND INHIBITORS</scope>
    <scope>FUNCTION</scope>
    <scope>CATALYTIC ACTIVITY</scope>
    <scope>COFACTOR</scope>
    <scope>DOMAIN</scope>
</reference>
<dbReference type="EC" id="1.5.3.5" evidence="2 3 4 6 7 8"/>
<dbReference type="EMBL" id="AJ223391">
    <property type="protein sequence ID" value="CAA11306.1"/>
    <property type="molecule type" value="Genomic_DNA"/>
</dbReference>
<dbReference type="EMBL" id="AF373840">
    <property type="protein sequence ID" value="AAK64245.1"/>
    <property type="molecule type" value="Genomic_DNA"/>
</dbReference>
<dbReference type="EMBL" id="AJ507836">
    <property type="protein sequence ID" value="CAD47951.1"/>
    <property type="molecule type" value="Genomic_DNA"/>
</dbReference>
<dbReference type="RefSeq" id="WP_016359462.1">
    <property type="nucleotide sequence ID" value="NZ_JAGINZ010000002.1"/>
</dbReference>
<dbReference type="RefSeq" id="YP_007988777.1">
    <property type="nucleotide sequence ID" value="NC_021229.1"/>
</dbReference>
<dbReference type="PDB" id="3K7M">
    <property type="method" value="X-ray"/>
    <property type="resolution" value="1.95 A"/>
    <property type="chains" value="X=1-425"/>
</dbReference>
<dbReference type="PDB" id="3K7Q">
    <property type="method" value="X-ray"/>
    <property type="resolution" value="2.05 A"/>
    <property type="chains" value="X=1-425"/>
</dbReference>
<dbReference type="PDB" id="3K7T">
    <property type="method" value="X-ray"/>
    <property type="resolution" value="2.85 A"/>
    <property type="chains" value="A/B=1-425"/>
</dbReference>
<dbReference type="PDB" id="3NG7">
    <property type="method" value="X-ray"/>
    <property type="resolution" value="1.95 A"/>
    <property type="chains" value="X=1-425"/>
</dbReference>
<dbReference type="PDB" id="3NGC">
    <property type="method" value="X-ray"/>
    <property type="resolution" value="2.25 A"/>
    <property type="chains" value="X=1-425"/>
</dbReference>
<dbReference type="PDB" id="3NH3">
    <property type="method" value="X-ray"/>
    <property type="resolution" value="2.10 A"/>
    <property type="chains" value="X=1-425"/>
</dbReference>
<dbReference type="PDB" id="3NHO">
    <property type="method" value="X-ray"/>
    <property type="resolution" value="2.85 A"/>
    <property type="chains" value="X=1-425"/>
</dbReference>
<dbReference type="PDB" id="3NK0">
    <property type="method" value="X-ray"/>
    <property type="resolution" value="2.15 A"/>
    <property type="chains" value="X=1-425"/>
</dbReference>
<dbReference type="PDB" id="3NK1">
    <property type="method" value="X-ray"/>
    <property type="resolution" value="2.20 A"/>
    <property type="chains" value="X=1-425"/>
</dbReference>
<dbReference type="PDB" id="3NK2">
    <property type="method" value="X-ray"/>
    <property type="resolution" value="2.65 A"/>
    <property type="chains" value="X=1-425"/>
</dbReference>
<dbReference type="PDB" id="3NN0">
    <property type="method" value="X-ray"/>
    <property type="resolution" value="2.75 A"/>
    <property type="chains" value="X=1-425"/>
</dbReference>
<dbReference type="PDB" id="3NN6">
    <property type="method" value="X-ray"/>
    <property type="resolution" value="2.19 A"/>
    <property type="chains" value="X=1-425"/>
</dbReference>
<dbReference type="PDBsum" id="3K7M"/>
<dbReference type="PDBsum" id="3K7Q"/>
<dbReference type="PDBsum" id="3K7T"/>
<dbReference type="PDBsum" id="3NG7"/>
<dbReference type="PDBsum" id="3NGC"/>
<dbReference type="PDBsum" id="3NH3"/>
<dbReference type="PDBsum" id="3NHO"/>
<dbReference type="PDBsum" id="3NK0"/>
<dbReference type="PDBsum" id="3NK1"/>
<dbReference type="PDBsum" id="3NK2"/>
<dbReference type="PDBsum" id="3NN0"/>
<dbReference type="PDBsum" id="3NN6"/>
<dbReference type="SMR" id="Q93NH4"/>
<dbReference type="BindingDB" id="Q93NH4"/>
<dbReference type="KEGG" id="ag:CAA11306"/>
<dbReference type="BioCyc" id="MetaCyc:MONOMER-964"/>
<dbReference type="BRENDA" id="1.5.3.5">
    <property type="organism ID" value="449"/>
</dbReference>
<dbReference type="BRENDA" id="1.5.99.14">
    <property type="organism ID" value="449"/>
</dbReference>
<dbReference type="BRENDA" id="1.5.99.4">
    <property type="organism ID" value="449"/>
</dbReference>
<dbReference type="STRENDA-DB" id="ACGIG9">
    <property type="experiment" value="N166A L-HO-nicotine oxidase pH 8"/>
</dbReference>
<dbReference type="STRENDA-DB" id="TRPJDT">
    <property type="experiment" value="Y311F L-6-HO-nicotine oxidase"/>
</dbReference>
<dbReference type="STRENDA-DB" id="WJUCPX">
    <property type="experiment" value="wild-type enzyme"/>
</dbReference>
<dbReference type="UniPathway" id="UPA00106">
    <property type="reaction ID" value="UER00919"/>
</dbReference>
<dbReference type="EvolutionaryTrace" id="Q93NH4"/>
<dbReference type="GO" id="GO:0005737">
    <property type="term" value="C:cytoplasm"/>
    <property type="evidence" value="ECO:0007669"/>
    <property type="project" value="UniProtKB-SubCell"/>
</dbReference>
<dbReference type="GO" id="GO:0018531">
    <property type="term" value="F:(S)-6-hydroxynicotine oxidase activity"/>
    <property type="evidence" value="ECO:0007669"/>
    <property type="project" value="UniProtKB-EC"/>
</dbReference>
<dbReference type="GO" id="GO:0000166">
    <property type="term" value="F:nucleotide binding"/>
    <property type="evidence" value="ECO:0007669"/>
    <property type="project" value="UniProtKB-KW"/>
</dbReference>
<dbReference type="GO" id="GO:0009820">
    <property type="term" value="P:alkaloid metabolic process"/>
    <property type="evidence" value="ECO:0007669"/>
    <property type="project" value="UniProtKB-KW"/>
</dbReference>
<dbReference type="GO" id="GO:0019608">
    <property type="term" value="P:nicotine catabolic process"/>
    <property type="evidence" value="ECO:0007669"/>
    <property type="project" value="UniProtKB-UniPathway"/>
</dbReference>
<dbReference type="Gene3D" id="3.90.660.10">
    <property type="match status" value="2"/>
</dbReference>
<dbReference type="Gene3D" id="3.50.50.60">
    <property type="entry name" value="FAD/NAD(P)-binding domain"/>
    <property type="match status" value="2"/>
</dbReference>
<dbReference type="InterPro" id="IPR002937">
    <property type="entry name" value="Amino_oxidase"/>
</dbReference>
<dbReference type="InterPro" id="IPR036188">
    <property type="entry name" value="FAD/NAD-bd_sf"/>
</dbReference>
<dbReference type="InterPro" id="IPR001613">
    <property type="entry name" value="Flavin_amine_oxidase"/>
</dbReference>
<dbReference type="InterPro" id="IPR050703">
    <property type="entry name" value="Flavin_MAO"/>
</dbReference>
<dbReference type="PANTHER" id="PTHR43563">
    <property type="entry name" value="AMINE OXIDASE"/>
    <property type="match status" value="1"/>
</dbReference>
<dbReference type="PANTHER" id="PTHR43563:SF1">
    <property type="entry name" value="AMINE OXIDASE [FLAVIN-CONTAINING] B"/>
    <property type="match status" value="1"/>
</dbReference>
<dbReference type="Pfam" id="PF01593">
    <property type="entry name" value="Amino_oxidase"/>
    <property type="match status" value="1"/>
</dbReference>
<dbReference type="PRINTS" id="PR00757">
    <property type="entry name" value="AMINEOXDASEF"/>
</dbReference>
<dbReference type="SUPFAM" id="SSF51905">
    <property type="entry name" value="FAD/NAD(P)-binding domain"/>
    <property type="match status" value="1"/>
</dbReference>
<name>HLNO_PAENI</name>